<protein>
    <recommendedName>
        <fullName evidence="5">CCR4-Not complex 3'-5'-exoribonuclease subunit Ccr4</fullName>
        <ecNumber>3.1.13.4</ecNumber>
    </recommendedName>
    <alternativeName>
        <fullName>Carbon catabolite repressor protein 4</fullName>
    </alternativeName>
    <alternativeName>
        <fullName>Cytoplasmic deadenylase</fullName>
    </alternativeName>
    <alternativeName>
        <fullName>Glucose-repressible alcohol dehydrogenase transcriptional effector</fullName>
    </alternativeName>
</protein>
<sequence length="758" mass="85806">MADGTYRFQQPGAGQFYFQTQQHNHHPAHQRHLIRNGTSSPTGRLKFNNTDTPSPSRSPPLNQSPSHNSYTMYSQGHQGQPVMMNGQSHQRFGMPMPKFQHPTHHPHHAQQPHHPHSQSTQNLAHQHNFSGGALSNAAQHFTPAHLQNGTTSNVEDEIEEPMNEHWQQQLQLAAESRQASSPHYYARAVAQQTKGLQLSSNQADPNENGTEERNRATAVKDHRRQDWVALDFGGQGLRALSNGLFHYSFLDKLYLNHNKLKSLPSSIGELKNLTHLDISSNELTEIPEEIGMLTNLKKLLLFDNSLQTLPFELGYLYQLDTLGIEGNPLADVLKSRIMQEGTKSLIKYLKEEMPVHLPPSNRDWLILDETGKNSANGGNDNKFTALTYNTLCDRYATNQQYGYAPSRALAWEFRRDLLLNEIRGHDADIVCLQEIDQGSYHGFFREQLAYNDYKGVYWPKGRAQGMPEEEAKLVDGCATFFKGSKYILLEKNMIHFGQTAVRRPDAKGQDDIYNRLWQKDNIAVIVFLENRLTGERLIVVNAHIYWDPAYKDVKLIQVAIMMEEVTQLAEKYVKIPPCTDKTAFRFSEPEDGKESQGTSTPVEPAPSVEYSSASQIPILVCGDFNSCPGSAVYNLLAHGRMAEEHPDLEQRLYGNLSRMGMSHPFTLKSAYSTIGELSFTNYTPGFTDVIDYIWYSSNTLQVTALLGEVDKEYLKRVPGFPNYHFPSDHLALMAEFSVKSKKNKPVEADFGPQREKTM</sequence>
<reference key="1">
    <citation type="journal article" date="2009" name="Genome Res.">
        <title>Comparative genomic analyses of the human fungal pathogens Coccidioides and their relatives.</title>
        <authorList>
            <person name="Sharpton T.J."/>
            <person name="Stajich J.E."/>
            <person name="Rounsley S.D."/>
            <person name="Gardner M.J."/>
            <person name="Wortman J.R."/>
            <person name="Jordar V.S."/>
            <person name="Maiti R."/>
            <person name="Kodira C.D."/>
            <person name="Neafsey D.E."/>
            <person name="Zeng Q."/>
            <person name="Hung C.-Y."/>
            <person name="McMahan C."/>
            <person name="Muszewska A."/>
            <person name="Grynberg M."/>
            <person name="Mandel M.A."/>
            <person name="Kellner E.M."/>
            <person name="Barker B.M."/>
            <person name="Galgiani J.N."/>
            <person name="Orbach M.J."/>
            <person name="Kirkland T.N."/>
            <person name="Cole G.T."/>
            <person name="Henn M.R."/>
            <person name="Birren B.W."/>
            <person name="Taylor J.W."/>
        </authorList>
    </citation>
    <scope>NUCLEOTIDE SEQUENCE [LARGE SCALE GENOMIC DNA]</scope>
    <source>
        <strain>RS</strain>
    </source>
</reference>
<reference key="2">
    <citation type="journal article" date="2010" name="Genome Res.">
        <title>Population genomic sequencing of Coccidioides fungi reveals recent hybridization and transposon control.</title>
        <authorList>
            <person name="Neafsey D.E."/>
            <person name="Barker B.M."/>
            <person name="Sharpton T.J."/>
            <person name="Stajich J.E."/>
            <person name="Park D.J."/>
            <person name="Whiston E."/>
            <person name="Hung C.-Y."/>
            <person name="McMahan C."/>
            <person name="White J."/>
            <person name="Sykes S."/>
            <person name="Heiman D."/>
            <person name="Young S."/>
            <person name="Zeng Q."/>
            <person name="Abouelleil A."/>
            <person name="Aftuck L."/>
            <person name="Bessette D."/>
            <person name="Brown A."/>
            <person name="FitzGerald M."/>
            <person name="Lui A."/>
            <person name="Macdonald J.P."/>
            <person name="Priest M."/>
            <person name="Orbach M.J."/>
            <person name="Galgiani J.N."/>
            <person name="Kirkland T.N."/>
            <person name="Cole G.T."/>
            <person name="Birren B.W."/>
            <person name="Henn M.R."/>
            <person name="Taylor J.W."/>
            <person name="Rounsley S.D."/>
        </authorList>
    </citation>
    <scope>GENOME REANNOTATION</scope>
    <source>
        <strain>RS</strain>
    </source>
</reference>
<dbReference type="EC" id="3.1.13.4"/>
<dbReference type="EMBL" id="GG704911">
    <property type="protein sequence ID" value="EAS35248.2"/>
    <property type="molecule type" value="Genomic_DNA"/>
</dbReference>
<dbReference type="RefSeq" id="XP_001246831.2">
    <property type="nucleotide sequence ID" value="XM_001246830.2"/>
</dbReference>
<dbReference type="SMR" id="Q1EA11"/>
<dbReference type="FunCoup" id="Q1EA11">
    <property type="interactions" value="433"/>
</dbReference>
<dbReference type="STRING" id="246410.Q1EA11"/>
<dbReference type="GeneID" id="4565344"/>
<dbReference type="KEGG" id="cim:CIMG_00602"/>
<dbReference type="VEuPathDB" id="FungiDB:CIMG_00602"/>
<dbReference type="InParanoid" id="Q1EA11"/>
<dbReference type="OMA" id="PHYYARA"/>
<dbReference type="OrthoDB" id="428734at2759"/>
<dbReference type="Proteomes" id="UP000001261">
    <property type="component" value="Unassembled WGS sequence"/>
</dbReference>
<dbReference type="GO" id="GO:0005737">
    <property type="term" value="C:cytoplasm"/>
    <property type="evidence" value="ECO:0007669"/>
    <property type="project" value="UniProtKB-SubCell"/>
</dbReference>
<dbReference type="GO" id="GO:0005634">
    <property type="term" value="C:nucleus"/>
    <property type="evidence" value="ECO:0007669"/>
    <property type="project" value="UniProtKB-SubCell"/>
</dbReference>
<dbReference type="GO" id="GO:0046872">
    <property type="term" value="F:metal ion binding"/>
    <property type="evidence" value="ECO:0007669"/>
    <property type="project" value="UniProtKB-KW"/>
</dbReference>
<dbReference type="GO" id="GO:0004535">
    <property type="term" value="F:poly(A)-specific ribonuclease activity"/>
    <property type="evidence" value="ECO:0007669"/>
    <property type="project" value="UniProtKB-EC"/>
</dbReference>
<dbReference type="GO" id="GO:0003723">
    <property type="term" value="F:RNA binding"/>
    <property type="evidence" value="ECO:0007669"/>
    <property type="project" value="UniProtKB-KW"/>
</dbReference>
<dbReference type="CDD" id="cd09097">
    <property type="entry name" value="Deadenylase_CCR4"/>
    <property type="match status" value="1"/>
</dbReference>
<dbReference type="FunFam" id="3.60.10.10:FF:000037">
    <property type="entry name" value="Glucose-repressible alcohol dehydrogenase transcriptional effector"/>
    <property type="match status" value="1"/>
</dbReference>
<dbReference type="FunFam" id="3.80.10.10:FF:000447">
    <property type="entry name" value="Glucose-repressible alcohol dehydrogenase transcriptional effector"/>
    <property type="match status" value="1"/>
</dbReference>
<dbReference type="Gene3D" id="3.60.10.10">
    <property type="entry name" value="Endonuclease/exonuclease/phosphatase"/>
    <property type="match status" value="1"/>
</dbReference>
<dbReference type="Gene3D" id="3.80.10.10">
    <property type="entry name" value="Ribonuclease Inhibitor"/>
    <property type="match status" value="1"/>
</dbReference>
<dbReference type="InterPro" id="IPR050410">
    <property type="entry name" value="CCR4/nocturin_mRNA_transcr"/>
</dbReference>
<dbReference type="InterPro" id="IPR036691">
    <property type="entry name" value="Endo/exonu/phosph_ase_sf"/>
</dbReference>
<dbReference type="InterPro" id="IPR005135">
    <property type="entry name" value="Endo/exonuclease/phosphatase"/>
</dbReference>
<dbReference type="InterPro" id="IPR001611">
    <property type="entry name" value="Leu-rich_rpt"/>
</dbReference>
<dbReference type="InterPro" id="IPR003591">
    <property type="entry name" value="Leu-rich_rpt_typical-subtyp"/>
</dbReference>
<dbReference type="InterPro" id="IPR032675">
    <property type="entry name" value="LRR_dom_sf"/>
</dbReference>
<dbReference type="PANTHER" id="PTHR12121">
    <property type="entry name" value="CARBON CATABOLITE REPRESSOR PROTEIN 4"/>
    <property type="match status" value="1"/>
</dbReference>
<dbReference type="PANTHER" id="PTHR12121:SF100">
    <property type="entry name" value="POLY(A)-SPECIFIC RIBONUCLEASE"/>
    <property type="match status" value="1"/>
</dbReference>
<dbReference type="Pfam" id="PF03372">
    <property type="entry name" value="Exo_endo_phos"/>
    <property type="match status" value="1"/>
</dbReference>
<dbReference type="Pfam" id="PF13855">
    <property type="entry name" value="LRR_8"/>
    <property type="match status" value="1"/>
</dbReference>
<dbReference type="SMART" id="SM00369">
    <property type="entry name" value="LRR_TYP"/>
    <property type="match status" value="3"/>
</dbReference>
<dbReference type="SUPFAM" id="SSF56219">
    <property type="entry name" value="DNase I-like"/>
    <property type="match status" value="1"/>
</dbReference>
<dbReference type="SUPFAM" id="SSF52058">
    <property type="entry name" value="L domain-like"/>
    <property type="match status" value="1"/>
</dbReference>
<dbReference type="PROSITE" id="PS51450">
    <property type="entry name" value="LRR"/>
    <property type="match status" value="3"/>
</dbReference>
<proteinExistence type="inferred from homology"/>
<comment type="function">
    <text evidence="3">Acts as a catalytic component of the CCR4-NOT core complex, which in the nucleus seems to be a general transcription factor, and in the cytoplasm the major mRNA deadenylase involved in mRNA turnover (By similarity). Ccr4 has 3'-5' RNase activity with a strong preference for polyadenylated substrates and also low exonuclease activity towards single-stranded DNA (By similarity).</text>
</comment>
<comment type="catalytic activity">
    <reaction>
        <text>Exonucleolytic cleavage of poly(A) to 5'-AMP.</text>
        <dbReference type="EC" id="3.1.13.4"/>
    </reaction>
</comment>
<comment type="cofactor">
    <cofactor evidence="1">
        <name>Mg(2+)</name>
        <dbReference type="ChEBI" id="CHEBI:18420"/>
    </cofactor>
</comment>
<comment type="subcellular location">
    <subcellularLocation>
        <location evidence="1">Cytoplasm</location>
    </subcellularLocation>
    <subcellularLocation>
        <location evidence="1">Nucleus</location>
    </subcellularLocation>
</comment>
<comment type="similarity">
    <text evidence="5">Belongs to the CCR4/nocturin family.</text>
</comment>
<gene>
    <name type="primary">CCR4</name>
    <name type="ORF">CIMG_00602</name>
</gene>
<name>CCR4_COCIM</name>
<feature type="chain" id="PRO_0000290609" description="CCR4-Not complex 3'-5'-exoribonuclease subunit Ccr4">
    <location>
        <begin position="1"/>
        <end position="758"/>
    </location>
</feature>
<feature type="repeat" description="LRR 1">
    <location>
        <begin position="224"/>
        <end position="247"/>
    </location>
</feature>
<feature type="repeat" description="LRR 2">
    <location>
        <begin position="248"/>
        <end position="270"/>
    </location>
</feature>
<feature type="repeat" description="LRR 3">
    <location>
        <begin position="271"/>
        <end position="294"/>
    </location>
</feature>
<feature type="repeat" description="LRR 4">
    <location>
        <begin position="296"/>
        <end position="319"/>
    </location>
</feature>
<feature type="region of interest" description="Disordered" evidence="4">
    <location>
        <begin position="22"/>
        <end position="123"/>
    </location>
</feature>
<feature type="region of interest" description="Disordered" evidence="4">
    <location>
        <begin position="146"/>
        <end position="179"/>
    </location>
</feature>
<feature type="region of interest" description="Disordered" evidence="4">
    <location>
        <begin position="196"/>
        <end position="217"/>
    </location>
</feature>
<feature type="region of interest" description="Disordered" evidence="4">
    <location>
        <begin position="584"/>
        <end position="606"/>
    </location>
</feature>
<feature type="compositionally biased region" description="Basic residues" evidence="4">
    <location>
        <begin position="23"/>
        <end position="34"/>
    </location>
</feature>
<feature type="compositionally biased region" description="Polar residues" evidence="4">
    <location>
        <begin position="36"/>
        <end position="78"/>
    </location>
</feature>
<feature type="compositionally biased region" description="Basic residues" evidence="4">
    <location>
        <begin position="101"/>
        <end position="116"/>
    </location>
</feature>
<feature type="compositionally biased region" description="Polar residues" evidence="4">
    <location>
        <begin position="165"/>
        <end position="179"/>
    </location>
</feature>
<feature type="compositionally biased region" description="Polar residues" evidence="4">
    <location>
        <begin position="196"/>
        <end position="208"/>
    </location>
</feature>
<feature type="binding site" evidence="2">
    <location>
        <position position="434"/>
    </location>
    <ligand>
        <name>Mg(2+)</name>
        <dbReference type="ChEBI" id="CHEBI:18420"/>
    </ligand>
</feature>
<accession>Q1EA11</accession>
<accession>J3KHF3</accession>
<evidence type="ECO:0000250" key="1"/>
<evidence type="ECO:0000250" key="2">
    <source>
        <dbReference type="UniProtKB" id="O95551"/>
    </source>
</evidence>
<evidence type="ECO:0000250" key="3">
    <source>
        <dbReference type="UniProtKB" id="P31384"/>
    </source>
</evidence>
<evidence type="ECO:0000256" key="4">
    <source>
        <dbReference type="SAM" id="MobiDB-lite"/>
    </source>
</evidence>
<evidence type="ECO:0000305" key="5"/>
<keyword id="KW-0963">Cytoplasm</keyword>
<keyword id="KW-0269">Exonuclease</keyword>
<keyword id="KW-0378">Hydrolase</keyword>
<keyword id="KW-0433">Leucine-rich repeat</keyword>
<keyword id="KW-0460">Magnesium</keyword>
<keyword id="KW-0479">Metal-binding</keyword>
<keyword id="KW-0540">Nuclease</keyword>
<keyword id="KW-0539">Nucleus</keyword>
<keyword id="KW-1185">Reference proteome</keyword>
<keyword id="KW-0677">Repeat</keyword>
<keyword id="KW-0694">RNA-binding</keyword>
<keyword id="KW-0804">Transcription</keyword>
<keyword id="KW-0805">Transcription regulation</keyword>
<organism>
    <name type="scientific">Coccidioides immitis (strain RS)</name>
    <name type="common">Valley fever fungus</name>
    <dbReference type="NCBI Taxonomy" id="246410"/>
    <lineage>
        <taxon>Eukaryota</taxon>
        <taxon>Fungi</taxon>
        <taxon>Dikarya</taxon>
        <taxon>Ascomycota</taxon>
        <taxon>Pezizomycotina</taxon>
        <taxon>Eurotiomycetes</taxon>
        <taxon>Eurotiomycetidae</taxon>
        <taxon>Onygenales</taxon>
        <taxon>Onygenaceae</taxon>
        <taxon>Coccidioides</taxon>
    </lineage>
</organism>